<name>MIAA_ANADE</name>
<sequence>MRLVLVAGPTASGKTALAVALAQRLGGEIVNADSQQVYRGLDVGTAKPTAEERAAAPHHLLDLVEPGEGMDAARFAALADAAIADIAARGRVPIVAGGTGLYVRALLHGVVEAPGRDPELRRALEAEAARDGRPALHARLAAVDPAAAARIRPNDLVRVVRALEIAAGGRTPSELYQAHAFREDRYDAALLALDPPRAELHARIDARVRAMFAGGLLEEARALAARFGGALPARLPIGYAEAAAHLRGELDLEEAIRRVQVAHRRYARRQVIWLRKERGVVWIAPPYDPEALARRVEKR</sequence>
<evidence type="ECO:0000255" key="1">
    <source>
        <dbReference type="HAMAP-Rule" id="MF_00185"/>
    </source>
</evidence>
<comment type="function">
    <text evidence="1">Catalyzes the transfer of a dimethylallyl group onto the adenine at position 37 in tRNAs that read codons beginning with uridine, leading to the formation of N6-(dimethylallyl)adenosine (i(6)A).</text>
</comment>
<comment type="catalytic activity">
    <reaction evidence="1">
        <text>adenosine(37) in tRNA + dimethylallyl diphosphate = N(6)-dimethylallyladenosine(37) in tRNA + diphosphate</text>
        <dbReference type="Rhea" id="RHEA:26482"/>
        <dbReference type="Rhea" id="RHEA-COMP:10162"/>
        <dbReference type="Rhea" id="RHEA-COMP:10375"/>
        <dbReference type="ChEBI" id="CHEBI:33019"/>
        <dbReference type="ChEBI" id="CHEBI:57623"/>
        <dbReference type="ChEBI" id="CHEBI:74411"/>
        <dbReference type="ChEBI" id="CHEBI:74415"/>
        <dbReference type="EC" id="2.5.1.75"/>
    </reaction>
</comment>
<comment type="cofactor">
    <cofactor evidence="1">
        <name>Mg(2+)</name>
        <dbReference type="ChEBI" id="CHEBI:18420"/>
    </cofactor>
</comment>
<comment type="subunit">
    <text evidence="1">Monomer.</text>
</comment>
<comment type="similarity">
    <text evidence="1">Belongs to the IPP transferase family.</text>
</comment>
<reference key="1">
    <citation type="submission" date="2006-01" db="EMBL/GenBank/DDBJ databases">
        <title>Complete sequence of Anaeromyxobacter dehalogenans 2CP-C.</title>
        <authorList>
            <person name="Copeland A."/>
            <person name="Lucas S."/>
            <person name="Lapidus A."/>
            <person name="Barry K."/>
            <person name="Detter J.C."/>
            <person name="Glavina T."/>
            <person name="Hammon N."/>
            <person name="Israni S."/>
            <person name="Pitluck S."/>
            <person name="Brettin T."/>
            <person name="Bruce D."/>
            <person name="Han C."/>
            <person name="Tapia R."/>
            <person name="Gilna P."/>
            <person name="Kiss H."/>
            <person name="Schmutz J."/>
            <person name="Larimer F."/>
            <person name="Land M."/>
            <person name="Kyrpides N."/>
            <person name="Anderson I."/>
            <person name="Sanford R.A."/>
            <person name="Ritalahti K.M."/>
            <person name="Thomas H.S."/>
            <person name="Kirby J.R."/>
            <person name="Zhulin I.B."/>
            <person name="Loeffler F.E."/>
            <person name="Richardson P."/>
        </authorList>
    </citation>
    <scope>NUCLEOTIDE SEQUENCE [LARGE SCALE GENOMIC DNA]</scope>
    <source>
        <strain>2CP-C</strain>
    </source>
</reference>
<protein>
    <recommendedName>
        <fullName evidence="1">tRNA dimethylallyltransferase</fullName>
        <ecNumber evidence="1">2.5.1.75</ecNumber>
    </recommendedName>
    <alternativeName>
        <fullName evidence="1">Dimethylallyl diphosphate:tRNA dimethylallyltransferase</fullName>
        <shortName evidence="1">DMAPP:tRNA dimethylallyltransferase</shortName>
        <shortName evidence="1">DMATase</shortName>
    </alternativeName>
    <alternativeName>
        <fullName evidence="1">Isopentenyl-diphosphate:tRNA isopentenyltransferase</fullName>
        <shortName evidence="1">IPP transferase</shortName>
        <shortName evidence="1">IPPT</shortName>
        <shortName evidence="1">IPTase</shortName>
    </alternativeName>
</protein>
<gene>
    <name evidence="1" type="primary">miaA</name>
    <name type="ordered locus">Adeh_1512</name>
</gene>
<proteinExistence type="inferred from homology"/>
<feature type="chain" id="PRO_0000377062" description="tRNA dimethylallyltransferase">
    <location>
        <begin position="1"/>
        <end position="299"/>
    </location>
</feature>
<feature type="region of interest" description="Interaction with substrate tRNA" evidence="1">
    <location>
        <begin position="33"/>
        <end position="36"/>
    </location>
</feature>
<feature type="binding site" evidence="1">
    <location>
        <begin position="8"/>
        <end position="15"/>
    </location>
    <ligand>
        <name>ATP</name>
        <dbReference type="ChEBI" id="CHEBI:30616"/>
    </ligand>
</feature>
<feature type="binding site" evidence="1">
    <location>
        <begin position="10"/>
        <end position="15"/>
    </location>
    <ligand>
        <name>substrate</name>
    </ligand>
</feature>
<feature type="site" description="Interaction with substrate tRNA" evidence="1">
    <location>
        <position position="99"/>
    </location>
</feature>
<feature type="site" description="Interaction with substrate tRNA" evidence="1">
    <location>
        <position position="121"/>
    </location>
</feature>
<keyword id="KW-0067">ATP-binding</keyword>
<keyword id="KW-0460">Magnesium</keyword>
<keyword id="KW-0547">Nucleotide-binding</keyword>
<keyword id="KW-1185">Reference proteome</keyword>
<keyword id="KW-0808">Transferase</keyword>
<keyword id="KW-0819">tRNA processing</keyword>
<accession>Q2II09</accession>
<dbReference type="EC" id="2.5.1.75" evidence="1"/>
<dbReference type="EMBL" id="CP000251">
    <property type="protein sequence ID" value="ABC81285.1"/>
    <property type="molecule type" value="Genomic_DNA"/>
</dbReference>
<dbReference type="RefSeq" id="WP_011420568.1">
    <property type="nucleotide sequence ID" value="NC_007760.1"/>
</dbReference>
<dbReference type="SMR" id="Q2II09"/>
<dbReference type="STRING" id="290397.Adeh_1512"/>
<dbReference type="KEGG" id="ade:Adeh_1512"/>
<dbReference type="eggNOG" id="COG0324">
    <property type="taxonomic scope" value="Bacteria"/>
</dbReference>
<dbReference type="HOGENOM" id="CLU_032616_0_1_7"/>
<dbReference type="OrthoDB" id="9776390at2"/>
<dbReference type="Proteomes" id="UP000001935">
    <property type="component" value="Chromosome"/>
</dbReference>
<dbReference type="GO" id="GO:0005524">
    <property type="term" value="F:ATP binding"/>
    <property type="evidence" value="ECO:0007669"/>
    <property type="project" value="UniProtKB-UniRule"/>
</dbReference>
<dbReference type="GO" id="GO:0052381">
    <property type="term" value="F:tRNA dimethylallyltransferase activity"/>
    <property type="evidence" value="ECO:0007669"/>
    <property type="project" value="UniProtKB-UniRule"/>
</dbReference>
<dbReference type="GO" id="GO:0006400">
    <property type="term" value="P:tRNA modification"/>
    <property type="evidence" value="ECO:0007669"/>
    <property type="project" value="TreeGrafter"/>
</dbReference>
<dbReference type="Gene3D" id="1.10.20.140">
    <property type="match status" value="1"/>
</dbReference>
<dbReference type="Gene3D" id="3.40.50.300">
    <property type="entry name" value="P-loop containing nucleotide triphosphate hydrolases"/>
    <property type="match status" value="1"/>
</dbReference>
<dbReference type="HAMAP" id="MF_00185">
    <property type="entry name" value="IPP_trans"/>
    <property type="match status" value="1"/>
</dbReference>
<dbReference type="InterPro" id="IPR039657">
    <property type="entry name" value="Dimethylallyltransferase"/>
</dbReference>
<dbReference type="InterPro" id="IPR018022">
    <property type="entry name" value="IPT"/>
</dbReference>
<dbReference type="InterPro" id="IPR027417">
    <property type="entry name" value="P-loop_NTPase"/>
</dbReference>
<dbReference type="NCBIfam" id="TIGR00174">
    <property type="entry name" value="miaA"/>
    <property type="match status" value="1"/>
</dbReference>
<dbReference type="PANTHER" id="PTHR11088">
    <property type="entry name" value="TRNA DIMETHYLALLYLTRANSFERASE"/>
    <property type="match status" value="1"/>
</dbReference>
<dbReference type="PANTHER" id="PTHR11088:SF60">
    <property type="entry name" value="TRNA DIMETHYLALLYLTRANSFERASE"/>
    <property type="match status" value="1"/>
</dbReference>
<dbReference type="Pfam" id="PF01715">
    <property type="entry name" value="IPPT"/>
    <property type="match status" value="1"/>
</dbReference>
<dbReference type="SUPFAM" id="SSF52540">
    <property type="entry name" value="P-loop containing nucleoside triphosphate hydrolases"/>
    <property type="match status" value="2"/>
</dbReference>
<organism>
    <name type="scientific">Anaeromyxobacter dehalogenans (strain 2CP-C)</name>
    <dbReference type="NCBI Taxonomy" id="290397"/>
    <lineage>
        <taxon>Bacteria</taxon>
        <taxon>Pseudomonadati</taxon>
        <taxon>Myxococcota</taxon>
        <taxon>Myxococcia</taxon>
        <taxon>Myxococcales</taxon>
        <taxon>Cystobacterineae</taxon>
        <taxon>Anaeromyxobacteraceae</taxon>
        <taxon>Anaeromyxobacter</taxon>
    </lineage>
</organism>